<evidence type="ECO:0000255" key="1">
    <source>
        <dbReference type="HAMAP-Rule" id="MF_00429"/>
    </source>
</evidence>
<dbReference type="EC" id="7.2.1.1" evidence="1"/>
<dbReference type="EMBL" id="AM286690">
    <property type="protein sequence ID" value="CAL16484.1"/>
    <property type="molecule type" value="Genomic_DNA"/>
</dbReference>
<dbReference type="RefSeq" id="WP_011588320.1">
    <property type="nucleotide sequence ID" value="NC_008260.1"/>
</dbReference>
<dbReference type="SMR" id="Q0VQR4"/>
<dbReference type="STRING" id="393595.ABO_1036"/>
<dbReference type="KEGG" id="abo:ABO_1036"/>
<dbReference type="eggNOG" id="COG2209">
    <property type="taxonomic scope" value="Bacteria"/>
</dbReference>
<dbReference type="HOGENOM" id="CLU_095255_0_0_6"/>
<dbReference type="OrthoDB" id="9803631at2"/>
<dbReference type="Proteomes" id="UP000008871">
    <property type="component" value="Chromosome"/>
</dbReference>
<dbReference type="GO" id="GO:0009276">
    <property type="term" value="C:Gram-negative-bacterium-type cell wall"/>
    <property type="evidence" value="ECO:0007669"/>
    <property type="project" value="InterPro"/>
</dbReference>
<dbReference type="GO" id="GO:0005886">
    <property type="term" value="C:plasma membrane"/>
    <property type="evidence" value="ECO:0007669"/>
    <property type="project" value="UniProtKB-SubCell"/>
</dbReference>
<dbReference type="GO" id="GO:0016655">
    <property type="term" value="F:oxidoreductase activity, acting on NAD(P)H, quinone or similar compound as acceptor"/>
    <property type="evidence" value="ECO:0007669"/>
    <property type="project" value="UniProtKB-UniRule"/>
</dbReference>
<dbReference type="GO" id="GO:0022904">
    <property type="term" value="P:respiratory electron transport chain"/>
    <property type="evidence" value="ECO:0007669"/>
    <property type="project" value="InterPro"/>
</dbReference>
<dbReference type="GO" id="GO:0006814">
    <property type="term" value="P:sodium ion transport"/>
    <property type="evidence" value="ECO:0007669"/>
    <property type="project" value="UniProtKB-UniRule"/>
</dbReference>
<dbReference type="HAMAP" id="MF_00429">
    <property type="entry name" value="NqrE"/>
    <property type="match status" value="1"/>
</dbReference>
<dbReference type="InterPro" id="IPR003667">
    <property type="entry name" value="NqrDE/RnfAE"/>
</dbReference>
<dbReference type="InterPro" id="IPR050133">
    <property type="entry name" value="NqrDE/RnfAE_oxidrdctase"/>
</dbReference>
<dbReference type="InterPro" id="IPR010967">
    <property type="entry name" value="NqrE"/>
</dbReference>
<dbReference type="NCBIfam" id="TIGR01940">
    <property type="entry name" value="nqrE"/>
    <property type="match status" value="1"/>
</dbReference>
<dbReference type="PANTHER" id="PTHR30335">
    <property type="entry name" value="INTEGRAL MEMBRANE PROTEIN OF SOXR-REDUCING COMPLEX"/>
    <property type="match status" value="1"/>
</dbReference>
<dbReference type="PANTHER" id="PTHR30335:SF1">
    <property type="entry name" value="NA(+)-TRANSLOCATING NADH-QUINONE REDUCTASE SUBUNIT E"/>
    <property type="match status" value="1"/>
</dbReference>
<dbReference type="Pfam" id="PF02508">
    <property type="entry name" value="Rnf-Nqr"/>
    <property type="match status" value="1"/>
</dbReference>
<dbReference type="PIRSF" id="PIRSF006102">
    <property type="entry name" value="NQR_DE"/>
    <property type="match status" value="1"/>
</dbReference>
<protein>
    <recommendedName>
        <fullName evidence="1">Na(+)-translocating NADH-quinone reductase subunit E</fullName>
        <shortName evidence="1">Na(+)-NQR subunit E</shortName>
        <shortName evidence="1">Na(+)-translocating NQR subunit E</shortName>
        <ecNumber evidence="1">7.2.1.1</ecNumber>
    </recommendedName>
    <alternativeName>
        <fullName evidence="1">NQR complex subunit E</fullName>
    </alternativeName>
    <alternativeName>
        <fullName evidence="1">NQR-1 subunit E</fullName>
    </alternativeName>
</protein>
<keyword id="KW-0997">Cell inner membrane</keyword>
<keyword id="KW-1003">Cell membrane</keyword>
<keyword id="KW-0406">Ion transport</keyword>
<keyword id="KW-0472">Membrane</keyword>
<keyword id="KW-0520">NAD</keyword>
<keyword id="KW-1185">Reference proteome</keyword>
<keyword id="KW-0915">Sodium</keyword>
<keyword id="KW-0739">Sodium transport</keyword>
<keyword id="KW-1278">Translocase</keyword>
<keyword id="KW-0812">Transmembrane</keyword>
<keyword id="KW-1133">Transmembrane helix</keyword>
<keyword id="KW-0813">Transport</keyword>
<keyword id="KW-0830">Ubiquinone</keyword>
<proteinExistence type="inferred from homology"/>
<sequence length="206" mass="22166">MFEHYLSLFVRAVFVENMALAFFLGMCTFIAISKKIQTAIGLGIAVVVVLAITVPVNNLILHNLLEEGALSWTGSEQLASLDLRFLGLLSYIGVIAAIVQILEMTLDKYVPSLYNALGIFLPLITVNCAIMGASLFMVERDYTFGESVVYGVGAGVGWALAITLLAGIREKLKYSDVPDGLKGLGITFITVGLMSLGFMSFSGVQL</sequence>
<comment type="function">
    <text evidence="1">NQR complex catalyzes the reduction of ubiquinone-1 to ubiquinol by two successive reactions, coupled with the transport of Na(+) ions from the cytoplasm to the periplasm. NqrA to NqrE are probably involved in the second step, the conversion of ubisemiquinone to ubiquinol.</text>
</comment>
<comment type="catalytic activity">
    <reaction evidence="1">
        <text>a ubiquinone + n Na(+)(in) + NADH + H(+) = a ubiquinol + n Na(+)(out) + NAD(+)</text>
        <dbReference type="Rhea" id="RHEA:47748"/>
        <dbReference type="Rhea" id="RHEA-COMP:9565"/>
        <dbReference type="Rhea" id="RHEA-COMP:9566"/>
        <dbReference type="ChEBI" id="CHEBI:15378"/>
        <dbReference type="ChEBI" id="CHEBI:16389"/>
        <dbReference type="ChEBI" id="CHEBI:17976"/>
        <dbReference type="ChEBI" id="CHEBI:29101"/>
        <dbReference type="ChEBI" id="CHEBI:57540"/>
        <dbReference type="ChEBI" id="CHEBI:57945"/>
        <dbReference type="EC" id="7.2.1.1"/>
    </reaction>
</comment>
<comment type="subunit">
    <text evidence="1">Composed of six subunits; NqrA, NqrB, NqrC, NqrD, NqrE and NqrF.</text>
</comment>
<comment type="subcellular location">
    <subcellularLocation>
        <location evidence="1">Cell inner membrane</location>
        <topology evidence="1">Multi-pass membrane protein</topology>
    </subcellularLocation>
</comment>
<comment type="similarity">
    <text evidence="1">Belongs to the NqrDE/RnfAE family.</text>
</comment>
<feature type="chain" id="PRO_1000060186" description="Na(+)-translocating NADH-quinone reductase subunit E">
    <location>
        <begin position="1"/>
        <end position="206"/>
    </location>
</feature>
<feature type="transmembrane region" description="Helical" evidence="1">
    <location>
        <begin position="12"/>
        <end position="32"/>
    </location>
</feature>
<feature type="transmembrane region" description="Helical" evidence="1">
    <location>
        <begin position="36"/>
        <end position="56"/>
    </location>
</feature>
<feature type="transmembrane region" description="Helical" evidence="1">
    <location>
        <begin position="85"/>
        <end position="105"/>
    </location>
</feature>
<feature type="transmembrane region" description="Helical" evidence="1">
    <location>
        <begin position="118"/>
        <end position="138"/>
    </location>
</feature>
<feature type="transmembrane region" description="Helical" evidence="1">
    <location>
        <begin position="148"/>
        <end position="168"/>
    </location>
</feature>
<feature type="transmembrane region" description="Helical" evidence="1">
    <location>
        <begin position="184"/>
        <end position="204"/>
    </location>
</feature>
<name>NQRE_ALCBS</name>
<reference key="1">
    <citation type="journal article" date="2006" name="Nat. Biotechnol.">
        <title>Genome sequence of the ubiquitous hydrocarbon-degrading marine bacterium Alcanivorax borkumensis.</title>
        <authorList>
            <person name="Schneiker S."/>
            <person name="Martins dos Santos V.A.P."/>
            <person name="Bartels D."/>
            <person name="Bekel T."/>
            <person name="Brecht M."/>
            <person name="Buhrmester J."/>
            <person name="Chernikova T.N."/>
            <person name="Denaro R."/>
            <person name="Ferrer M."/>
            <person name="Gertler C."/>
            <person name="Goesmann A."/>
            <person name="Golyshina O.V."/>
            <person name="Kaminski F."/>
            <person name="Khachane A.N."/>
            <person name="Lang S."/>
            <person name="Linke B."/>
            <person name="McHardy A.C."/>
            <person name="Meyer F."/>
            <person name="Nechitaylo T."/>
            <person name="Puehler A."/>
            <person name="Regenhardt D."/>
            <person name="Rupp O."/>
            <person name="Sabirova J.S."/>
            <person name="Selbitschka W."/>
            <person name="Yakimov M.M."/>
            <person name="Timmis K.N."/>
            <person name="Vorhoelter F.-J."/>
            <person name="Weidner S."/>
            <person name="Kaiser O."/>
            <person name="Golyshin P.N."/>
        </authorList>
    </citation>
    <scope>NUCLEOTIDE SEQUENCE [LARGE SCALE GENOMIC DNA]</scope>
    <source>
        <strain>ATCC 700651 / DSM 11573 / NCIMB 13689 / SK2</strain>
    </source>
</reference>
<accession>Q0VQR4</accession>
<organism>
    <name type="scientific">Alcanivorax borkumensis (strain ATCC 700651 / DSM 11573 / NCIMB 13689 / SK2)</name>
    <dbReference type="NCBI Taxonomy" id="393595"/>
    <lineage>
        <taxon>Bacteria</taxon>
        <taxon>Pseudomonadati</taxon>
        <taxon>Pseudomonadota</taxon>
        <taxon>Gammaproteobacteria</taxon>
        <taxon>Oceanospirillales</taxon>
        <taxon>Alcanivoracaceae</taxon>
        <taxon>Alcanivorax</taxon>
    </lineage>
</organism>
<gene>
    <name evidence="1" type="primary">nqrE</name>
    <name type="ordered locus">ABO_1036</name>
</gene>